<accession>B2X1U7</accession>
<reference key="1">
    <citation type="journal article" date="2008" name="J. Phycol.">
        <title>Deep division in the Chlorophyceae (Chlorophyta) revealed by chloroplast phylogenomic analyseS.</title>
        <authorList>
            <person name="Turmel M."/>
            <person name="Brouard J.-S."/>
            <person name="Gagnon C."/>
            <person name="Otis C."/>
            <person name="Lemieux C."/>
        </authorList>
        <dbReference type="AGRICOLA" id="IND44059346"/>
    </citation>
    <scope>NUCLEOTIDE SEQUENCE [GENOMIC DNA]</scope>
    <source>
        <strain>SAG 575-1b / CCAP 575/1B / UTEX LB 40</strain>
    </source>
</reference>
<reference key="2">
    <citation type="journal article" date="2008" name="BMC Genomics">
        <title>Chloroplast DNA sequence of the green alga Oedogonium cardiacum (Chlorophyceae): unique genome architecture, derived characters shared with the Chaetophorales and novel genes acquired through horizontal transfer.</title>
        <authorList>
            <person name="Brouard J.-S."/>
            <person name="Otis C."/>
            <person name="Lemieux C."/>
            <person name="Turmel M."/>
        </authorList>
    </citation>
    <scope>NUCLEOTIDE SEQUENCE [LARGE SCALE GENOMIC DNA]</scope>
    <source>
        <strain>SAG 575-1b / CCAP 575/1B / UTEX LB 40</strain>
    </source>
</reference>
<protein>
    <recommendedName>
        <fullName evidence="1">ATP synthase subunit c, chloroplastic</fullName>
    </recommendedName>
    <alternativeName>
        <fullName evidence="1">ATP synthase F(0) sector subunit c</fullName>
    </alternativeName>
    <alternativeName>
        <fullName evidence="1">ATPase subunit III</fullName>
    </alternativeName>
    <alternativeName>
        <fullName evidence="1">F-type ATPase subunit c</fullName>
        <shortName evidence="1">F-ATPase subunit c</shortName>
    </alternativeName>
    <alternativeName>
        <fullName evidence="1">Lipid-binding protein</fullName>
    </alternativeName>
</protein>
<sequence length="83" mass="8181">MNPLIAASSVIAAGLAIGLAAIGPGVGQGTVAGNAVEGIARQPEAEGKIRGTLLLSFAFMESLTIYGLVVALALLFANPFVGA</sequence>
<evidence type="ECO:0000255" key="1">
    <source>
        <dbReference type="HAMAP-Rule" id="MF_01396"/>
    </source>
</evidence>
<feature type="chain" id="PRO_0000362942" description="ATP synthase subunit c, chloroplastic">
    <location>
        <begin position="1"/>
        <end position="83"/>
    </location>
</feature>
<feature type="transmembrane region" description="Helical" evidence="1">
    <location>
        <begin position="3"/>
        <end position="23"/>
    </location>
</feature>
<feature type="transmembrane region" description="Helical" evidence="1">
    <location>
        <begin position="57"/>
        <end position="77"/>
    </location>
</feature>
<feature type="site" description="Reversibly protonated during proton transport" evidence="1">
    <location>
        <position position="61"/>
    </location>
</feature>
<geneLocation type="chloroplast"/>
<proteinExistence type="inferred from homology"/>
<comment type="function">
    <text evidence="1">F(1)F(0) ATP synthase produces ATP from ADP in the presence of a proton or sodium gradient. F-type ATPases consist of two structural domains, F(1) containing the extramembraneous catalytic core and F(0) containing the membrane proton channel, linked together by a central stalk and a peripheral stalk. During catalysis, ATP synthesis in the catalytic domain of F(1) is coupled via a rotary mechanism of the central stalk subunits to proton translocation.</text>
</comment>
<comment type="function">
    <text evidence="1">Key component of the F(0) channel; it plays a direct role in translocation across the membrane. A homomeric c-ring of between 10-14 subunits forms the central stalk rotor element with the F(1) delta and epsilon subunits.</text>
</comment>
<comment type="subunit">
    <text evidence="1">F-type ATPases have 2 components, F(1) - the catalytic core - and F(0) - the membrane proton channel. F(1) has five subunits: alpha(3), beta(3), gamma(1), delta(1), epsilon(1). F(0) has four main subunits: a(1), b(1), b'(1) and c(10-14). The alpha and beta chains form an alternating ring which encloses part of the gamma chain. F(1) is attached to F(0) by a central stalk formed by the gamma and epsilon chains, while a peripheral stalk is formed by the delta, b and b' chains.</text>
</comment>
<comment type="subcellular location">
    <subcellularLocation>
        <location evidence="1">Plastid</location>
        <location evidence="1">Chloroplast thylakoid membrane</location>
        <topology evidence="1">Multi-pass membrane protein</topology>
    </subcellularLocation>
</comment>
<comment type="miscellaneous">
    <text>In plastids the F-type ATPase is also known as CF(1)CF(0).</text>
</comment>
<comment type="similarity">
    <text evidence="1">Belongs to the ATPase C chain family.</text>
</comment>
<gene>
    <name evidence="1" type="primary">atpH</name>
</gene>
<dbReference type="EMBL" id="EF587322">
    <property type="protein sequence ID" value="ABU88160.1"/>
    <property type="molecule type" value="Genomic_DNA"/>
</dbReference>
<dbReference type="EMBL" id="EU677193">
    <property type="protein sequence ID" value="ACC97209.1"/>
    <property type="molecule type" value="Genomic_DNA"/>
</dbReference>
<dbReference type="RefSeq" id="YP_002000386.1">
    <property type="nucleotide sequence ID" value="NC_011031.1"/>
</dbReference>
<dbReference type="SMR" id="B2X1U7"/>
<dbReference type="GeneID" id="6440052"/>
<dbReference type="GO" id="GO:0009535">
    <property type="term" value="C:chloroplast thylakoid membrane"/>
    <property type="evidence" value="ECO:0007669"/>
    <property type="project" value="UniProtKB-SubCell"/>
</dbReference>
<dbReference type="GO" id="GO:0045259">
    <property type="term" value="C:proton-transporting ATP synthase complex"/>
    <property type="evidence" value="ECO:0007669"/>
    <property type="project" value="UniProtKB-KW"/>
</dbReference>
<dbReference type="GO" id="GO:0033177">
    <property type="term" value="C:proton-transporting two-sector ATPase complex, proton-transporting domain"/>
    <property type="evidence" value="ECO:0007669"/>
    <property type="project" value="InterPro"/>
</dbReference>
<dbReference type="GO" id="GO:0008289">
    <property type="term" value="F:lipid binding"/>
    <property type="evidence" value="ECO:0007669"/>
    <property type="project" value="UniProtKB-KW"/>
</dbReference>
<dbReference type="GO" id="GO:0046933">
    <property type="term" value="F:proton-transporting ATP synthase activity, rotational mechanism"/>
    <property type="evidence" value="ECO:0007669"/>
    <property type="project" value="UniProtKB-UniRule"/>
</dbReference>
<dbReference type="CDD" id="cd18183">
    <property type="entry name" value="ATP-synt_Fo_c_ATPH"/>
    <property type="match status" value="1"/>
</dbReference>
<dbReference type="FunFam" id="1.20.20.10:FF:000001">
    <property type="entry name" value="ATP synthase subunit c, chloroplastic"/>
    <property type="match status" value="1"/>
</dbReference>
<dbReference type="Gene3D" id="1.20.20.10">
    <property type="entry name" value="F1F0 ATP synthase subunit C"/>
    <property type="match status" value="1"/>
</dbReference>
<dbReference type="HAMAP" id="MF_01396">
    <property type="entry name" value="ATP_synth_c_bact"/>
    <property type="match status" value="1"/>
</dbReference>
<dbReference type="InterPro" id="IPR005953">
    <property type="entry name" value="ATP_synth_csu_bac/chlpt"/>
</dbReference>
<dbReference type="InterPro" id="IPR000454">
    <property type="entry name" value="ATP_synth_F0_csu"/>
</dbReference>
<dbReference type="InterPro" id="IPR020537">
    <property type="entry name" value="ATP_synth_F0_csu_DDCD_BS"/>
</dbReference>
<dbReference type="InterPro" id="IPR038662">
    <property type="entry name" value="ATP_synth_F0_csu_sf"/>
</dbReference>
<dbReference type="InterPro" id="IPR002379">
    <property type="entry name" value="ATPase_proteolipid_c-like_dom"/>
</dbReference>
<dbReference type="InterPro" id="IPR035921">
    <property type="entry name" value="F/V-ATP_Csub_sf"/>
</dbReference>
<dbReference type="NCBIfam" id="TIGR01260">
    <property type="entry name" value="ATP_synt_c"/>
    <property type="match status" value="1"/>
</dbReference>
<dbReference type="NCBIfam" id="NF005608">
    <property type="entry name" value="PRK07354.1"/>
    <property type="match status" value="1"/>
</dbReference>
<dbReference type="PANTHER" id="PTHR10031">
    <property type="entry name" value="ATP SYNTHASE LIPID-BINDING PROTEIN, MITOCHONDRIAL"/>
    <property type="match status" value="1"/>
</dbReference>
<dbReference type="PANTHER" id="PTHR10031:SF0">
    <property type="entry name" value="ATPASE PROTEIN 9"/>
    <property type="match status" value="1"/>
</dbReference>
<dbReference type="Pfam" id="PF00137">
    <property type="entry name" value="ATP-synt_C"/>
    <property type="match status" value="1"/>
</dbReference>
<dbReference type="PRINTS" id="PR00124">
    <property type="entry name" value="ATPASEC"/>
</dbReference>
<dbReference type="SUPFAM" id="SSF81333">
    <property type="entry name" value="F1F0 ATP synthase subunit C"/>
    <property type="match status" value="1"/>
</dbReference>
<dbReference type="PROSITE" id="PS00605">
    <property type="entry name" value="ATPASE_C"/>
    <property type="match status" value="1"/>
</dbReference>
<name>ATPH_OEDCA</name>
<keyword id="KW-0066">ATP synthesis</keyword>
<keyword id="KW-0138">CF(0)</keyword>
<keyword id="KW-0150">Chloroplast</keyword>
<keyword id="KW-0375">Hydrogen ion transport</keyword>
<keyword id="KW-0406">Ion transport</keyword>
<keyword id="KW-0446">Lipid-binding</keyword>
<keyword id="KW-0472">Membrane</keyword>
<keyword id="KW-0934">Plastid</keyword>
<keyword id="KW-0793">Thylakoid</keyword>
<keyword id="KW-0812">Transmembrane</keyword>
<keyword id="KW-1133">Transmembrane helix</keyword>
<keyword id="KW-0813">Transport</keyword>
<organism>
    <name type="scientific">Oedogonium cardiacum</name>
    <name type="common">Filamentous green alga</name>
    <dbReference type="NCBI Taxonomy" id="55995"/>
    <lineage>
        <taxon>Eukaryota</taxon>
        <taxon>Viridiplantae</taxon>
        <taxon>Chlorophyta</taxon>
        <taxon>core chlorophytes</taxon>
        <taxon>Chlorophyceae</taxon>
        <taxon>OCC clade</taxon>
        <taxon>Oedogoniales</taxon>
        <taxon>Oedogoniaceae</taxon>
        <taxon>Oedogonium</taxon>
    </lineage>
</organism>